<feature type="chain" id="PRO_1000086906" description="ATP synthase subunit beta">
    <location>
        <begin position="1"/>
        <end position="467"/>
    </location>
</feature>
<feature type="binding site" evidence="1">
    <location>
        <begin position="152"/>
        <end position="159"/>
    </location>
    <ligand>
        <name>ATP</name>
        <dbReference type="ChEBI" id="CHEBI:30616"/>
    </ligand>
</feature>
<keyword id="KW-0066">ATP synthesis</keyword>
<keyword id="KW-0067">ATP-binding</keyword>
<keyword id="KW-1003">Cell membrane</keyword>
<keyword id="KW-0139">CF(1)</keyword>
<keyword id="KW-0375">Hydrogen ion transport</keyword>
<keyword id="KW-0406">Ion transport</keyword>
<keyword id="KW-0472">Membrane</keyword>
<keyword id="KW-0547">Nucleotide-binding</keyword>
<keyword id="KW-1278">Translocase</keyword>
<keyword id="KW-0813">Transport</keyword>
<evidence type="ECO:0000255" key="1">
    <source>
        <dbReference type="HAMAP-Rule" id="MF_01347"/>
    </source>
</evidence>
<protein>
    <recommendedName>
        <fullName evidence="1">ATP synthase subunit beta</fullName>
        <ecNumber evidence="1">7.1.2.2</ecNumber>
    </recommendedName>
    <alternativeName>
        <fullName evidence="1">ATP synthase F1 sector subunit beta</fullName>
    </alternativeName>
    <alternativeName>
        <fullName evidence="1">F-ATPase subunit beta</fullName>
    </alternativeName>
</protein>
<dbReference type="EC" id="7.1.2.2" evidence="1"/>
<dbReference type="EMBL" id="CP000679">
    <property type="protein sequence ID" value="ABP67555.1"/>
    <property type="molecule type" value="Genomic_DNA"/>
</dbReference>
<dbReference type="RefSeq" id="WP_011917491.1">
    <property type="nucleotide sequence ID" value="NC_009437.1"/>
</dbReference>
<dbReference type="SMR" id="A4XKX0"/>
<dbReference type="STRING" id="351627.Csac_1970"/>
<dbReference type="KEGG" id="csc:Csac_1970"/>
<dbReference type="eggNOG" id="COG0055">
    <property type="taxonomic scope" value="Bacteria"/>
</dbReference>
<dbReference type="HOGENOM" id="CLU_022398_0_2_9"/>
<dbReference type="OrthoDB" id="9803053at2"/>
<dbReference type="Proteomes" id="UP000000256">
    <property type="component" value="Chromosome"/>
</dbReference>
<dbReference type="GO" id="GO:0005886">
    <property type="term" value="C:plasma membrane"/>
    <property type="evidence" value="ECO:0007669"/>
    <property type="project" value="UniProtKB-SubCell"/>
</dbReference>
<dbReference type="GO" id="GO:0045259">
    <property type="term" value="C:proton-transporting ATP synthase complex"/>
    <property type="evidence" value="ECO:0007669"/>
    <property type="project" value="UniProtKB-KW"/>
</dbReference>
<dbReference type="GO" id="GO:0005524">
    <property type="term" value="F:ATP binding"/>
    <property type="evidence" value="ECO:0007669"/>
    <property type="project" value="UniProtKB-UniRule"/>
</dbReference>
<dbReference type="GO" id="GO:0016887">
    <property type="term" value="F:ATP hydrolysis activity"/>
    <property type="evidence" value="ECO:0007669"/>
    <property type="project" value="InterPro"/>
</dbReference>
<dbReference type="GO" id="GO:0046933">
    <property type="term" value="F:proton-transporting ATP synthase activity, rotational mechanism"/>
    <property type="evidence" value="ECO:0007669"/>
    <property type="project" value="UniProtKB-UniRule"/>
</dbReference>
<dbReference type="CDD" id="cd18110">
    <property type="entry name" value="ATP-synt_F1_beta_C"/>
    <property type="match status" value="1"/>
</dbReference>
<dbReference type="CDD" id="cd18115">
    <property type="entry name" value="ATP-synt_F1_beta_N"/>
    <property type="match status" value="1"/>
</dbReference>
<dbReference type="CDD" id="cd01133">
    <property type="entry name" value="F1-ATPase_beta_CD"/>
    <property type="match status" value="1"/>
</dbReference>
<dbReference type="FunFam" id="1.10.1140.10:FF:000001">
    <property type="entry name" value="ATP synthase subunit beta"/>
    <property type="match status" value="1"/>
</dbReference>
<dbReference type="FunFam" id="2.40.10.170:FF:000005">
    <property type="entry name" value="ATP synthase subunit beta"/>
    <property type="match status" value="1"/>
</dbReference>
<dbReference type="FunFam" id="3.40.50.300:FF:000026">
    <property type="entry name" value="ATP synthase subunit beta"/>
    <property type="match status" value="1"/>
</dbReference>
<dbReference type="Gene3D" id="2.40.10.170">
    <property type="match status" value="1"/>
</dbReference>
<dbReference type="Gene3D" id="1.10.1140.10">
    <property type="entry name" value="Bovine Mitochondrial F1-atpase, Atp Synthase Beta Chain, Chain D, domain 3"/>
    <property type="match status" value="1"/>
</dbReference>
<dbReference type="Gene3D" id="3.40.50.300">
    <property type="entry name" value="P-loop containing nucleotide triphosphate hydrolases"/>
    <property type="match status" value="1"/>
</dbReference>
<dbReference type="HAMAP" id="MF_01347">
    <property type="entry name" value="ATP_synth_beta_bact"/>
    <property type="match status" value="1"/>
</dbReference>
<dbReference type="InterPro" id="IPR003593">
    <property type="entry name" value="AAA+_ATPase"/>
</dbReference>
<dbReference type="InterPro" id="IPR055190">
    <property type="entry name" value="ATP-synt_VA_C"/>
</dbReference>
<dbReference type="InterPro" id="IPR005722">
    <property type="entry name" value="ATP_synth_F1_bsu"/>
</dbReference>
<dbReference type="InterPro" id="IPR020003">
    <property type="entry name" value="ATPase_a/bsu_AS"/>
</dbReference>
<dbReference type="InterPro" id="IPR050053">
    <property type="entry name" value="ATPase_alpha/beta_chains"/>
</dbReference>
<dbReference type="InterPro" id="IPR004100">
    <property type="entry name" value="ATPase_F1/V1/A1_a/bsu_N"/>
</dbReference>
<dbReference type="InterPro" id="IPR036121">
    <property type="entry name" value="ATPase_F1/V1/A1_a/bsu_N_sf"/>
</dbReference>
<dbReference type="InterPro" id="IPR000194">
    <property type="entry name" value="ATPase_F1/V1/A1_a/bsu_nucl-bd"/>
</dbReference>
<dbReference type="InterPro" id="IPR024034">
    <property type="entry name" value="ATPase_F1/V1_b/a_C"/>
</dbReference>
<dbReference type="InterPro" id="IPR027417">
    <property type="entry name" value="P-loop_NTPase"/>
</dbReference>
<dbReference type="NCBIfam" id="TIGR01039">
    <property type="entry name" value="atpD"/>
    <property type="match status" value="1"/>
</dbReference>
<dbReference type="PANTHER" id="PTHR15184">
    <property type="entry name" value="ATP SYNTHASE"/>
    <property type="match status" value="1"/>
</dbReference>
<dbReference type="PANTHER" id="PTHR15184:SF71">
    <property type="entry name" value="ATP SYNTHASE SUBUNIT BETA, MITOCHONDRIAL"/>
    <property type="match status" value="1"/>
</dbReference>
<dbReference type="Pfam" id="PF00006">
    <property type="entry name" value="ATP-synt_ab"/>
    <property type="match status" value="1"/>
</dbReference>
<dbReference type="Pfam" id="PF02874">
    <property type="entry name" value="ATP-synt_ab_N"/>
    <property type="match status" value="1"/>
</dbReference>
<dbReference type="Pfam" id="PF22919">
    <property type="entry name" value="ATP-synt_VA_C"/>
    <property type="match status" value="1"/>
</dbReference>
<dbReference type="PIRSF" id="PIRSF039072">
    <property type="entry name" value="ATPase_subunit_beta"/>
    <property type="match status" value="1"/>
</dbReference>
<dbReference type="SMART" id="SM00382">
    <property type="entry name" value="AAA"/>
    <property type="match status" value="1"/>
</dbReference>
<dbReference type="SUPFAM" id="SSF47917">
    <property type="entry name" value="C-terminal domain of alpha and beta subunits of F1 ATP synthase"/>
    <property type="match status" value="1"/>
</dbReference>
<dbReference type="SUPFAM" id="SSF50615">
    <property type="entry name" value="N-terminal domain of alpha and beta subunits of F1 ATP synthase"/>
    <property type="match status" value="1"/>
</dbReference>
<dbReference type="SUPFAM" id="SSF52540">
    <property type="entry name" value="P-loop containing nucleoside triphosphate hydrolases"/>
    <property type="match status" value="1"/>
</dbReference>
<dbReference type="PROSITE" id="PS00152">
    <property type="entry name" value="ATPASE_ALPHA_BETA"/>
    <property type="match status" value="1"/>
</dbReference>
<name>ATPB_CALS8</name>
<comment type="function">
    <text evidence="1">Produces ATP from ADP in the presence of a proton gradient across the membrane. The catalytic sites are hosted primarily by the beta subunits.</text>
</comment>
<comment type="catalytic activity">
    <reaction evidence="1">
        <text>ATP + H2O + 4 H(+)(in) = ADP + phosphate + 5 H(+)(out)</text>
        <dbReference type="Rhea" id="RHEA:57720"/>
        <dbReference type="ChEBI" id="CHEBI:15377"/>
        <dbReference type="ChEBI" id="CHEBI:15378"/>
        <dbReference type="ChEBI" id="CHEBI:30616"/>
        <dbReference type="ChEBI" id="CHEBI:43474"/>
        <dbReference type="ChEBI" id="CHEBI:456216"/>
        <dbReference type="EC" id="7.1.2.2"/>
    </reaction>
</comment>
<comment type="subunit">
    <text evidence="1">F-type ATPases have 2 components, CF(1) - the catalytic core - and CF(0) - the membrane proton channel. CF(1) has five subunits: alpha(3), beta(3), gamma(1), delta(1), epsilon(1). CF(0) has three main subunits: a(1), b(2) and c(9-12). The alpha and beta chains form an alternating ring which encloses part of the gamma chain. CF(1) is attached to CF(0) by a central stalk formed by the gamma and epsilon chains, while a peripheral stalk is formed by the delta and b chains.</text>
</comment>
<comment type="subcellular location">
    <subcellularLocation>
        <location evidence="1">Cell membrane</location>
        <topology evidence="1">Peripheral membrane protein</topology>
    </subcellularLocation>
</comment>
<comment type="similarity">
    <text evidence="1">Belongs to the ATPase alpha/beta chains family.</text>
</comment>
<proteinExistence type="inferred from homology"/>
<sequence>MEQNVGYVVQIIGPVVDVRFESGNLPAINNAIEIHFDGKTLVAEVAQHLGNDTVRCVALGSTDGLRRGVKAIDTGGPIKVPVGRGTLGRIFNVLGQPIDNKGEVQATDYWPIHRSAPSFEEQVPAVEIFETGIKVIDLLAPYAKGGKIGLFGGAGVGKTVLIMELIRNIATEHGGFSIFTGVGERTREGNDLWLEMNESGVIEKTVLVFGQMNEPPGARMRVALTGLTMAEYFRDVEGQDVLLFIDNIFRFIQAGSEVSALLGRIPSAVGYQPTLANEVGALQERITSTKRGSITSVQAIYVPADDLTDPAPATTFAHLDATTVLSRQIAELGIYPAVDPLDSTSRILDPRIVGEEHYYVARTVQQILQRYKELQDIIAILGMDELSEEDKLIVYRARKIQRFLSQPFFVAEAFTGRPGRYVKLKDTIRGFKEIIEGKMDHIPEQYFYMVGTIDEVYENYEKDMKGK</sequence>
<reference key="1">
    <citation type="submission" date="2007-04" db="EMBL/GenBank/DDBJ databases">
        <title>Genome sequence of the thermophilic hydrogen-producing bacterium Caldicellulosiruptor saccharolyticus DSM 8903.</title>
        <authorList>
            <person name="Copeland A."/>
            <person name="Lucas S."/>
            <person name="Lapidus A."/>
            <person name="Barry K."/>
            <person name="Detter J.C."/>
            <person name="Glavina del Rio T."/>
            <person name="Hammon N."/>
            <person name="Israni S."/>
            <person name="Dalin E."/>
            <person name="Tice H."/>
            <person name="Pitluck S."/>
            <person name="Kiss H."/>
            <person name="Brettin T."/>
            <person name="Bruce D."/>
            <person name="Han C."/>
            <person name="Schmutz J."/>
            <person name="Larimer F."/>
            <person name="Land M."/>
            <person name="Hauser L."/>
            <person name="Kyrpides N."/>
            <person name="Lykidis A."/>
            <person name="van de Werken H.J.G."/>
            <person name="Verhaart M.R.A."/>
            <person name="VanFossen A.L."/>
            <person name="Lewis D.L."/>
            <person name="Nichols J.D."/>
            <person name="Goorissen H.P."/>
            <person name="van Niel E.W.J."/>
            <person name="Stams F.J.M."/>
            <person name="Willquist K.U."/>
            <person name="Ward D.E."/>
            <person name="van der Oost J."/>
            <person name="Kelly R.M."/>
            <person name="Kengen S.M.W."/>
            <person name="Richardson P."/>
        </authorList>
    </citation>
    <scope>NUCLEOTIDE SEQUENCE [LARGE SCALE GENOMIC DNA]</scope>
    <source>
        <strain>ATCC 43494 / DSM 8903 / Tp8T 6331</strain>
    </source>
</reference>
<accession>A4XKX0</accession>
<gene>
    <name evidence="1" type="primary">atpD</name>
    <name type="ordered locus">Csac_1970</name>
</gene>
<organism>
    <name type="scientific">Caldicellulosiruptor saccharolyticus (strain ATCC 43494 / DSM 8903 / Tp8T 6331)</name>
    <dbReference type="NCBI Taxonomy" id="351627"/>
    <lineage>
        <taxon>Bacteria</taxon>
        <taxon>Bacillati</taxon>
        <taxon>Bacillota</taxon>
        <taxon>Bacillota incertae sedis</taxon>
        <taxon>Caldicellulosiruptorales</taxon>
        <taxon>Caldicellulosiruptoraceae</taxon>
        <taxon>Caldicellulosiruptor</taxon>
    </lineage>
</organism>